<sequence>MASAGTQHYSIGLRQKNSFKQSGPSGTVPATPPEKPSEGRVWPQAHQQVKPIWKLEKKQVETLSAGLGPGLLGVPPQPAYFFCPSTLCSSGTTAVIAGHSSSCYLHSLPDLFNSTLLYRRSSYRQKPYQQLESFCLRSSPSEKSPFSLPQKSLPVSLTANKATSSMVFSMAQPMASSSTEPYLCLAAAGENPSGKSLASAISGKIPSPLSSSYKPMLNNNSFMWPNSTPVPLLQTTQGLKPVSPPKIQPVSWHHSGGTGDCAPQPVDHKVPKSIGTVPADASAHIALSTASSHDTSTTSVASSWYNRNNLAMRAEPLSCALDDSSDSQDPTKEIRFTEAVRKLTARGFEKMPRQGCQLEQSSFLNPSFQWNVLNRSRRWKPPAVNQQFPQEDAGSVRRVLPGASDTLGLDNTVFCTKRISIHLLASHASGLNHNPACESVIDSSAFGEGKAPGPPFPQTLGIANVATRLSSIQLGQSEKERPEEARELDSSDRDISSATDLQPDQAETEDTEEELVDGLEDCCSRDENEEEEGDSECSSLSAVSPSESVAMISRSCMEILTKPLSNHEKVVRPALIYSLFPNVPPTIYFGTRDERVEKLPWEQRKLLRWKMSTVTPNIVKQTIGRSHFKISKRNDDWLGCWGHHMKSPSFRSIREHQKLNHFPGSFQIGRKDRLWRNLSRMQSRFGKKEFSFFPQSFILPQDAKLLRKAWESSSRQKWIVKPPASARGIGIQVIHKWSQLPKRRPLLVQRYLHKPYLISGSKFDLRIYVYVTSYDPLRIYLFSDGLVRFASCKYSPSMKSLGNKFMHLTNYSVNKKNAEYQANADEMACQGHKWALKALWNYLSQKGVNSDAIWEKIKDVVVKTIISSEPYVTSLLKMYVRRPYSCHELFGFDIMLDENLKPWVLEVNISPSLHSSSPLDISIKGQMIRDLLNLAGFVLPNAEDIISSPSSCSSSTTSLPTSPGDKCRMAPEHVTAQKMKKAYYLTQKIPDQDFYASVLDVLTPDDVRILVEMEDEFSRRGQFERIFPSHISSRYLRFFEQPRYFNILTTQWEQKYHGNKLKGVDLLRSWCYKGFHMGVVSDSAPVWSLPTSLLTISKDDVILNAFSKSETSKLGKQSSCEVSLLLSEDGTTPKSKKTQAGLSPYPQKPSSSKDSEDTSKEPSLSTQTLPVIKCSGQTSRLSASSTFQSISDSLLAVSP</sequence>
<keyword id="KW-0002">3D-structure</keyword>
<keyword id="KW-0067">ATP-binding</keyword>
<keyword id="KW-0966">Cell projection</keyword>
<keyword id="KW-0969">Cilium</keyword>
<keyword id="KW-0963">Cytoplasm</keyword>
<keyword id="KW-0206">Cytoskeleton</keyword>
<keyword id="KW-0436">Ligase</keyword>
<keyword id="KW-0460">Magnesium</keyword>
<keyword id="KW-0479">Metal-binding</keyword>
<keyword id="KW-0493">Microtubule</keyword>
<keyword id="KW-0547">Nucleotide-binding</keyword>
<keyword id="KW-0597">Phosphoprotein</keyword>
<keyword id="KW-1267">Proteomics identification</keyword>
<keyword id="KW-1185">Reference proteome</keyword>
<comment type="function">
    <text evidence="3">Monoglutamylase which modifies both tubulin and non-tubulin proteins, adding a single glutamate on the gamma-carboxyl group of specific glutamate residues of target proteins. Involved in the side-chain initiation step of the polyglutamylation reaction but not in the elongation step. Preferentially modifies beta-tail tubulin over the alpha-tubulin. Monoglutamylates nucleosome assembly proteins NAP1L1 and NAP1L4. Monoglutamylates nucleotidyltransferase CGAS, leading to inhibition of CGAS catalytic activity, thereby preventing antiviral defense function. Involved in KLF4 glutamylation which impedes its ubiquitination, thereby leading to somatic cell reprogramming, pluripotency maintenance and embryogenesis.</text>
</comment>
<comment type="catalytic activity">
    <reaction evidence="3">
        <text>L-glutamyl-[protein] + L-glutamate + ATP = gamma-L-glutamyl-L-glutamyl-[protein] + ADP + phosphate + H(+)</text>
        <dbReference type="Rhea" id="RHEA:60144"/>
        <dbReference type="Rhea" id="RHEA-COMP:10208"/>
        <dbReference type="Rhea" id="RHEA-COMP:15517"/>
        <dbReference type="ChEBI" id="CHEBI:15378"/>
        <dbReference type="ChEBI" id="CHEBI:29973"/>
        <dbReference type="ChEBI" id="CHEBI:29985"/>
        <dbReference type="ChEBI" id="CHEBI:30616"/>
        <dbReference type="ChEBI" id="CHEBI:43474"/>
        <dbReference type="ChEBI" id="CHEBI:143622"/>
        <dbReference type="ChEBI" id="CHEBI:456216"/>
    </reaction>
    <physiologicalReaction direction="left-to-right" evidence="3">
        <dbReference type="Rhea" id="RHEA:60145"/>
    </physiologicalReaction>
</comment>
<comment type="cofactor">
    <cofactor evidence="1">
        <name>Mg(2+)</name>
        <dbReference type="ChEBI" id="CHEBI:18420"/>
    </cofactor>
</comment>
<comment type="subcellular location">
    <subcellularLocation>
        <location evidence="3">Cytoplasm</location>
    </subcellularLocation>
    <subcellularLocation>
        <location evidence="3">Cell projection</location>
        <location evidence="3">Cilium</location>
    </subcellularLocation>
    <subcellularLocation>
        <location evidence="3">Cytoplasm</location>
        <location evidence="3">Cytoskeleton</location>
        <location evidence="3">Cilium basal body</location>
    </subcellularLocation>
    <text evidence="3">Located in cilia. In some cells, also found in basal bodies.</text>
</comment>
<comment type="domain">
    <text evidence="2 7">The flexible c-MTBD (cationic microtubule binding domain) region mediates binding to microtubules. It is positively charged and becomes ordered when bound to microtubules: it interacts with a negatively charged patch on tubulin. The presence of positive charges in the c-MTBD region is essential for proper binding.</text>
</comment>
<comment type="domain">
    <text evidence="1">Arg-727 is the main determinant for regioselectivity, which segregates between initiases and elongases in all tubulin--tyrosine ligase family. A glutamine residue at this position is found in elongases TTLL6, TTLL9, TTLL11, TTLL13, TTLL10 and favors glutamate-chain elongation, whereas an arginine residue is found in initiases TTLL2, TTLL4, TTLL5, TTLL3, TTLL8 and favors initiation.</text>
</comment>
<comment type="similarity">
    <text evidence="9">Belongs to the tubulin--tyrosine ligase family.</text>
</comment>
<comment type="sequence caution" evidence="9">
    <conflict type="erroneous initiation">
        <sequence resource="EMBL-CDS" id="BAA11490"/>
    </conflict>
</comment>
<accession>Q14679</accession>
<accession>A8K6V5</accession>
<accession>Q8WW29</accession>
<protein>
    <recommendedName>
        <fullName evidence="3">Tubulin monoglutamylase TTLL4</fullName>
        <ecNumber evidence="3">6.3.2.-</ecNumber>
    </recommendedName>
    <alternativeName>
        <fullName evidence="3">Protein monoglutamylase TTLL4</fullName>
    </alternativeName>
    <alternativeName>
        <fullName>Tubulin--tyrosine ligase-like protein 4</fullName>
    </alternativeName>
</protein>
<organism>
    <name type="scientific">Homo sapiens</name>
    <name type="common">Human</name>
    <dbReference type="NCBI Taxonomy" id="9606"/>
    <lineage>
        <taxon>Eukaryota</taxon>
        <taxon>Metazoa</taxon>
        <taxon>Chordata</taxon>
        <taxon>Craniata</taxon>
        <taxon>Vertebrata</taxon>
        <taxon>Euteleostomi</taxon>
        <taxon>Mammalia</taxon>
        <taxon>Eutheria</taxon>
        <taxon>Euarchontoglires</taxon>
        <taxon>Primates</taxon>
        <taxon>Haplorrhini</taxon>
        <taxon>Catarrhini</taxon>
        <taxon>Hominidae</taxon>
        <taxon>Homo</taxon>
    </lineage>
</organism>
<evidence type="ECO:0000250" key="1">
    <source>
        <dbReference type="UniProtKB" id="A4Q9E8"/>
    </source>
</evidence>
<evidence type="ECO:0000250" key="2">
    <source>
        <dbReference type="UniProtKB" id="Q6ZT98"/>
    </source>
</evidence>
<evidence type="ECO:0000250" key="3">
    <source>
        <dbReference type="UniProtKB" id="Q80UG8"/>
    </source>
</evidence>
<evidence type="ECO:0000255" key="4">
    <source>
        <dbReference type="PROSITE-ProRule" id="PRU00568"/>
    </source>
</evidence>
<evidence type="ECO:0000256" key="5">
    <source>
        <dbReference type="SAM" id="MobiDB-lite"/>
    </source>
</evidence>
<evidence type="ECO:0000269" key="6">
    <source>
    </source>
</evidence>
<evidence type="ECO:0000269" key="7">
    <source>
    </source>
</evidence>
<evidence type="ECO:0000269" key="8">
    <source>
    </source>
</evidence>
<evidence type="ECO:0000305" key="9"/>
<evidence type="ECO:0000312" key="10">
    <source>
        <dbReference type="HGNC" id="HGNC:28976"/>
    </source>
</evidence>
<evidence type="ECO:0007744" key="11">
    <source>
    </source>
</evidence>
<dbReference type="EC" id="6.3.2.-" evidence="3"/>
<dbReference type="EMBL" id="D79995">
    <property type="protein sequence ID" value="BAA11490.2"/>
    <property type="status" value="ALT_INIT"/>
    <property type="molecule type" value="mRNA"/>
</dbReference>
<dbReference type="EMBL" id="AK291770">
    <property type="protein sequence ID" value="BAF84459.1"/>
    <property type="molecule type" value="mRNA"/>
</dbReference>
<dbReference type="EMBL" id="CH471063">
    <property type="protein sequence ID" value="EAW70651.1"/>
    <property type="molecule type" value="Genomic_DNA"/>
</dbReference>
<dbReference type="EMBL" id="BC021707">
    <property type="protein sequence ID" value="AAH21707.1"/>
    <property type="molecule type" value="mRNA"/>
</dbReference>
<dbReference type="CCDS" id="CCDS2422.1"/>
<dbReference type="RefSeq" id="NP_055455.3">
    <property type="nucleotide sequence ID" value="NM_014640.4"/>
</dbReference>
<dbReference type="RefSeq" id="XP_047302406.1">
    <property type="nucleotide sequence ID" value="XM_047446450.1"/>
</dbReference>
<dbReference type="RefSeq" id="XP_047302407.1">
    <property type="nucleotide sequence ID" value="XM_047446451.1"/>
</dbReference>
<dbReference type="RefSeq" id="XP_047302408.1">
    <property type="nucleotide sequence ID" value="XM_047446452.1"/>
</dbReference>
<dbReference type="RefSeq" id="XP_047302409.1">
    <property type="nucleotide sequence ID" value="XM_047446453.1"/>
</dbReference>
<dbReference type="RefSeq" id="XP_054200654.1">
    <property type="nucleotide sequence ID" value="XM_054344679.1"/>
</dbReference>
<dbReference type="RefSeq" id="XP_054200655.1">
    <property type="nucleotide sequence ID" value="XM_054344680.1"/>
</dbReference>
<dbReference type="RefSeq" id="XP_054200656.1">
    <property type="nucleotide sequence ID" value="XM_054344681.1"/>
</dbReference>
<dbReference type="RefSeq" id="XP_054200657.1">
    <property type="nucleotide sequence ID" value="XM_054344682.1"/>
</dbReference>
<dbReference type="PDB" id="5T6X">
    <property type="method" value="X-ray"/>
    <property type="resolution" value="1.69 A"/>
    <property type="chains" value="C=295-304"/>
</dbReference>
<dbReference type="PDBsum" id="5T6X"/>
<dbReference type="SMR" id="Q14679"/>
<dbReference type="BioGRID" id="115012">
    <property type="interactions" value="28"/>
</dbReference>
<dbReference type="FunCoup" id="Q14679">
    <property type="interactions" value="753"/>
</dbReference>
<dbReference type="IntAct" id="Q14679">
    <property type="interactions" value="15"/>
</dbReference>
<dbReference type="STRING" id="9606.ENSP00000375951"/>
<dbReference type="GlyGen" id="Q14679">
    <property type="glycosylation" value="1 site, 1 O-linked glycan (1 site)"/>
</dbReference>
<dbReference type="iPTMnet" id="Q14679"/>
<dbReference type="PhosphoSitePlus" id="Q14679"/>
<dbReference type="BioMuta" id="TTLL4"/>
<dbReference type="DMDM" id="143811470"/>
<dbReference type="jPOST" id="Q14679"/>
<dbReference type="MassIVE" id="Q14679"/>
<dbReference type="PaxDb" id="9606-ENSP00000375951"/>
<dbReference type="PeptideAtlas" id="Q14679"/>
<dbReference type="ProteomicsDB" id="60114"/>
<dbReference type="Pumba" id="Q14679"/>
<dbReference type="Antibodypedia" id="34286">
    <property type="antibodies" value="127 antibodies from 23 providers"/>
</dbReference>
<dbReference type="DNASU" id="9654"/>
<dbReference type="Ensembl" id="ENST00000258398.8">
    <property type="protein sequence ID" value="ENSP00000258398.4"/>
    <property type="gene ID" value="ENSG00000135912.11"/>
</dbReference>
<dbReference type="Ensembl" id="ENST00000392102.6">
    <property type="protein sequence ID" value="ENSP00000375951.1"/>
    <property type="gene ID" value="ENSG00000135912.11"/>
</dbReference>
<dbReference type="GeneID" id="9654"/>
<dbReference type="KEGG" id="hsa:9654"/>
<dbReference type="MANE-Select" id="ENST00000392102.6">
    <property type="protein sequence ID" value="ENSP00000375951.1"/>
    <property type="RefSeq nucleotide sequence ID" value="NM_014640.5"/>
    <property type="RefSeq protein sequence ID" value="NP_055455.3"/>
</dbReference>
<dbReference type="UCSC" id="uc002viy.4">
    <property type="organism name" value="human"/>
</dbReference>
<dbReference type="AGR" id="HGNC:28976"/>
<dbReference type="CTD" id="9654"/>
<dbReference type="DisGeNET" id="9654"/>
<dbReference type="GeneCards" id="TTLL4"/>
<dbReference type="HGNC" id="HGNC:28976">
    <property type="gene designation" value="TTLL4"/>
</dbReference>
<dbReference type="HPA" id="ENSG00000135912">
    <property type="expression patterns" value="Low tissue specificity"/>
</dbReference>
<dbReference type="MIM" id="618738">
    <property type="type" value="gene"/>
</dbReference>
<dbReference type="neXtProt" id="NX_Q14679"/>
<dbReference type="OpenTargets" id="ENSG00000135912"/>
<dbReference type="PharmGKB" id="PA134935712"/>
<dbReference type="VEuPathDB" id="HostDB:ENSG00000135912"/>
<dbReference type="eggNOG" id="KOG2156">
    <property type="taxonomic scope" value="Eukaryota"/>
</dbReference>
<dbReference type="GeneTree" id="ENSGT00940000157916"/>
<dbReference type="InParanoid" id="Q14679"/>
<dbReference type="OMA" id="HHMKSAS"/>
<dbReference type="OrthoDB" id="202825at2759"/>
<dbReference type="PAN-GO" id="Q14679">
    <property type="GO annotations" value="5 GO annotations based on evolutionary models"/>
</dbReference>
<dbReference type="PhylomeDB" id="Q14679"/>
<dbReference type="TreeFam" id="TF313087"/>
<dbReference type="PathwayCommons" id="Q14679"/>
<dbReference type="Reactome" id="R-HSA-8955332">
    <property type="pathway name" value="Carboxyterminal post-translational modifications of tubulin"/>
</dbReference>
<dbReference type="SignaLink" id="Q14679"/>
<dbReference type="BioGRID-ORCS" id="9654">
    <property type="hits" value="9 hits in 1157 CRISPR screens"/>
</dbReference>
<dbReference type="ChiTaRS" id="TTLL4">
    <property type="organism name" value="human"/>
</dbReference>
<dbReference type="GenomeRNAi" id="9654"/>
<dbReference type="Pharos" id="Q14679">
    <property type="development level" value="Tbio"/>
</dbReference>
<dbReference type="PRO" id="PR:Q14679"/>
<dbReference type="Proteomes" id="UP000005640">
    <property type="component" value="Chromosome 2"/>
</dbReference>
<dbReference type="RNAct" id="Q14679">
    <property type="molecule type" value="protein"/>
</dbReference>
<dbReference type="Bgee" id="ENSG00000135912">
    <property type="expression patterns" value="Expressed in left testis and 152 other cell types or tissues"/>
</dbReference>
<dbReference type="ExpressionAtlas" id="Q14679">
    <property type="expression patterns" value="baseline and differential"/>
</dbReference>
<dbReference type="GO" id="GO:0097731">
    <property type="term" value="C:9+0 non-motile cilium"/>
    <property type="evidence" value="ECO:0007669"/>
    <property type="project" value="Ensembl"/>
</dbReference>
<dbReference type="GO" id="GO:0036064">
    <property type="term" value="C:ciliary basal body"/>
    <property type="evidence" value="ECO:0000318"/>
    <property type="project" value="GO_Central"/>
</dbReference>
<dbReference type="GO" id="GO:0005829">
    <property type="term" value="C:cytosol"/>
    <property type="evidence" value="ECO:0000304"/>
    <property type="project" value="Reactome"/>
</dbReference>
<dbReference type="GO" id="GO:0005874">
    <property type="term" value="C:microtubule"/>
    <property type="evidence" value="ECO:0007669"/>
    <property type="project" value="UniProtKB-KW"/>
</dbReference>
<dbReference type="GO" id="GO:0005524">
    <property type="term" value="F:ATP binding"/>
    <property type="evidence" value="ECO:0007669"/>
    <property type="project" value="UniProtKB-KW"/>
</dbReference>
<dbReference type="GO" id="GO:0046872">
    <property type="term" value="F:metal ion binding"/>
    <property type="evidence" value="ECO:0007669"/>
    <property type="project" value="UniProtKB-KW"/>
</dbReference>
<dbReference type="GO" id="GO:0070739">
    <property type="term" value="F:protein-glutamic acid ligase activity"/>
    <property type="evidence" value="ECO:0000250"/>
    <property type="project" value="UniProtKB"/>
</dbReference>
<dbReference type="GO" id="GO:0106437">
    <property type="term" value="F:protein-glutamic acid ligase activity, initiating"/>
    <property type="evidence" value="ECO:0007669"/>
    <property type="project" value="RHEA"/>
</dbReference>
<dbReference type="GO" id="GO:0015631">
    <property type="term" value="F:tubulin binding"/>
    <property type="evidence" value="ECO:0000250"/>
    <property type="project" value="UniProtKB"/>
</dbReference>
<dbReference type="GO" id="GO:0070740">
    <property type="term" value="F:tubulin-glutamic acid ligase activity"/>
    <property type="evidence" value="ECO:0000250"/>
    <property type="project" value="UniProtKB"/>
</dbReference>
<dbReference type="GO" id="GO:0000226">
    <property type="term" value="P:microtubule cytoskeleton organization"/>
    <property type="evidence" value="ECO:0000318"/>
    <property type="project" value="GO_Central"/>
</dbReference>
<dbReference type="GO" id="GO:0018200">
    <property type="term" value="P:peptidyl-glutamic acid modification"/>
    <property type="evidence" value="ECO:0000250"/>
    <property type="project" value="UniProtKB"/>
</dbReference>
<dbReference type="GO" id="GO:0018095">
    <property type="term" value="P:protein polyglutamylation"/>
    <property type="evidence" value="ECO:0000250"/>
    <property type="project" value="UniProtKB"/>
</dbReference>
<dbReference type="GO" id="GO:0120222">
    <property type="term" value="P:regulation of blastocyst development"/>
    <property type="evidence" value="ECO:0007669"/>
    <property type="project" value="Ensembl"/>
</dbReference>
<dbReference type="FunFam" id="3.30.470.20:FF:000009">
    <property type="entry name" value="tubulin polyglutamylase TTLL5 isoform X1"/>
    <property type="match status" value="1"/>
</dbReference>
<dbReference type="Gene3D" id="3.30.470.20">
    <property type="entry name" value="ATP-grasp fold, B domain"/>
    <property type="match status" value="1"/>
</dbReference>
<dbReference type="InterPro" id="IPR004344">
    <property type="entry name" value="TTL/TTLL_fam"/>
</dbReference>
<dbReference type="PANTHER" id="PTHR12241:SF162">
    <property type="entry name" value="TUBULIN MONOGLUTAMYLASE TTLL4"/>
    <property type="match status" value="1"/>
</dbReference>
<dbReference type="PANTHER" id="PTHR12241">
    <property type="entry name" value="TUBULIN POLYGLUTAMYLASE"/>
    <property type="match status" value="1"/>
</dbReference>
<dbReference type="Pfam" id="PF03133">
    <property type="entry name" value="TTL"/>
    <property type="match status" value="1"/>
</dbReference>
<dbReference type="SUPFAM" id="SSF56059">
    <property type="entry name" value="Glutathione synthetase ATP-binding domain-like"/>
    <property type="match status" value="1"/>
</dbReference>
<dbReference type="PROSITE" id="PS51221">
    <property type="entry name" value="TTL"/>
    <property type="match status" value="1"/>
</dbReference>
<name>TTLL4_HUMAN</name>
<gene>
    <name evidence="10" type="primary">TTLL4</name>
    <name type="synonym">KIAA0173</name>
</gene>
<proteinExistence type="evidence at protein level"/>
<feature type="chain" id="PRO_0000212442" description="Tubulin monoglutamylase TTLL4">
    <location>
        <begin position="1"/>
        <end position="1199"/>
    </location>
</feature>
<feature type="domain" description="TTL" evidence="4">
    <location>
        <begin position="604"/>
        <end position="947"/>
    </location>
</feature>
<feature type="region of interest" description="Disordered" evidence="5">
    <location>
        <begin position="1"/>
        <end position="43"/>
    </location>
</feature>
<feature type="region of interest" description="Disordered" evidence="5">
    <location>
        <begin position="472"/>
        <end position="517"/>
    </location>
</feature>
<feature type="region of interest" description="Disordered" evidence="5">
    <location>
        <begin position="525"/>
        <end position="544"/>
    </location>
</feature>
<feature type="region of interest" description="c-MTBD region" evidence="7">
    <location>
        <begin position="918"/>
        <end position="1029"/>
    </location>
</feature>
<feature type="region of interest" description="Disordered" evidence="5">
    <location>
        <begin position="1130"/>
        <end position="1199"/>
    </location>
</feature>
<feature type="compositionally biased region" description="Polar residues" evidence="5">
    <location>
        <begin position="1"/>
        <end position="25"/>
    </location>
</feature>
<feature type="compositionally biased region" description="Basic and acidic residues" evidence="5">
    <location>
        <begin position="477"/>
        <end position="495"/>
    </location>
</feature>
<feature type="compositionally biased region" description="Acidic residues" evidence="5">
    <location>
        <begin position="506"/>
        <end position="517"/>
    </location>
</feature>
<feature type="compositionally biased region" description="Polar residues" evidence="5">
    <location>
        <begin position="1130"/>
        <end position="1141"/>
    </location>
</feature>
<feature type="compositionally biased region" description="Basic and acidic residues" evidence="5">
    <location>
        <begin position="1151"/>
        <end position="1160"/>
    </location>
</feature>
<feature type="compositionally biased region" description="Polar residues" evidence="5">
    <location>
        <begin position="1164"/>
        <end position="1192"/>
    </location>
</feature>
<feature type="binding site" evidence="1">
    <location>
        <position position="721"/>
    </location>
    <ligand>
        <name>ATP</name>
        <dbReference type="ChEBI" id="CHEBI:30616"/>
    </ligand>
</feature>
<feature type="binding site" evidence="1">
    <location>
        <begin position="727"/>
        <end position="728"/>
    </location>
    <ligand>
        <name>ATP</name>
        <dbReference type="ChEBI" id="CHEBI:30616"/>
    </ligand>
</feature>
<feature type="binding site" evidence="1">
    <location>
        <position position="727"/>
    </location>
    <ligand>
        <name>a protein</name>
        <dbReference type="ChEBI" id="CHEBI:16541"/>
    </ligand>
    <ligandPart>
        <name>L-glutamate residue</name>
        <dbReference type="ChEBI" id="CHEBI:29973"/>
        <note>L-glutamate acceptor residue in protein target</note>
    </ligandPart>
</feature>
<feature type="binding site" evidence="1">
    <location>
        <begin position="749"/>
        <end position="752"/>
    </location>
    <ligand>
        <name>ATP</name>
        <dbReference type="ChEBI" id="CHEBI:30616"/>
    </ligand>
</feature>
<feature type="binding site" evidence="1">
    <location>
        <begin position="762"/>
        <end position="764"/>
    </location>
    <ligand>
        <name>ATP</name>
        <dbReference type="ChEBI" id="CHEBI:30616"/>
    </ligand>
</feature>
<feature type="binding site" evidence="1">
    <location>
        <position position="788"/>
    </location>
    <ligand>
        <name>L-glutamate</name>
        <dbReference type="ChEBI" id="CHEBI:29985"/>
    </ligand>
</feature>
<feature type="binding site" evidence="1">
    <location>
        <begin position="809"/>
        <end position="810"/>
    </location>
    <ligand>
        <name>ATP</name>
        <dbReference type="ChEBI" id="CHEBI:30616"/>
    </ligand>
</feature>
<feature type="binding site" evidence="1">
    <location>
        <position position="811"/>
    </location>
    <ligand>
        <name>L-glutamate</name>
        <dbReference type="ChEBI" id="CHEBI:29985"/>
    </ligand>
</feature>
<feature type="binding site" evidence="1">
    <location>
        <position position="812"/>
    </location>
    <ligand>
        <name>L-glutamate</name>
        <dbReference type="ChEBI" id="CHEBI:29985"/>
    </ligand>
</feature>
<feature type="binding site" evidence="1">
    <location>
        <position position="833"/>
    </location>
    <ligand>
        <name>L-glutamate</name>
        <dbReference type="ChEBI" id="CHEBI:29985"/>
    </ligand>
</feature>
<feature type="binding site" evidence="1">
    <location>
        <position position="893"/>
    </location>
    <ligand>
        <name>Mg(2+)</name>
        <dbReference type="ChEBI" id="CHEBI:18420"/>
        <label>1</label>
    </ligand>
</feature>
<feature type="binding site" evidence="1">
    <location>
        <position position="906"/>
    </location>
    <ligand>
        <name>Mg(2+)</name>
        <dbReference type="ChEBI" id="CHEBI:18420"/>
        <label>1</label>
    </ligand>
</feature>
<feature type="binding site" evidence="1">
    <location>
        <position position="906"/>
    </location>
    <ligand>
        <name>Mg(2+)</name>
        <dbReference type="ChEBI" id="CHEBI:18420"/>
        <label>2</label>
    </ligand>
</feature>
<feature type="binding site" evidence="1">
    <location>
        <position position="908"/>
    </location>
    <ligand>
        <name>Mg(2+)</name>
        <dbReference type="ChEBI" id="CHEBI:18420"/>
        <label>2</label>
    </ligand>
</feature>
<feature type="binding site" evidence="1">
    <location>
        <position position="924"/>
    </location>
    <ligand>
        <name>L-glutamate</name>
        <dbReference type="ChEBI" id="CHEBI:29985"/>
    </ligand>
</feature>
<feature type="site" description="Essential for specifying initiation versus elongation step of the polyglutamylase activity" evidence="1">
    <location>
        <position position="727"/>
    </location>
</feature>
<feature type="modified residue" description="Phosphoserine" evidence="11">
    <location>
        <position position="691"/>
    </location>
</feature>
<feature type="sequence variant" id="VAR_031464" description="In dbSNP:rs11542786." evidence="6">
    <original>N</original>
    <variation>S</variation>
    <location>
        <position position="17"/>
    </location>
</feature>
<feature type="sequence variant" id="VAR_031465" description="In dbSNP:rs3731877." evidence="8">
    <original>E</original>
    <variation>Q</variation>
    <location>
        <position position="34"/>
    </location>
</feature>
<feature type="sequence variant" id="VAR_031466" description="In dbSNP:rs3731875.">
    <original>L</original>
    <variation>P</variation>
    <location>
        <position position="364"/>
    </location>
</feature>
<feature type="sequence variant" id="VAR_013140" description="In dbSNP:rs2114664.">
    <original>R</original>
    <variation>H</variation>
    <location>
        <position position="418"/>
    </location>
</feature>
<feature type="sequence variant" id="VAR_031467" description="In dbSNP:rs17851914." evidence="6">
    <original>G</original>
    <variation>S</variation>
    <location>
        <position position="518"/>
    </location>
</feature>
<feature type="sequence variant" id="VAR_031468" description="In dbSNP:rs17851915." evidence="6">
    <original>S</original>
    <variation>G</variation>
    <location>
        <position position="524"/>
    </location>
</feature>
<feature type="sequence variant" id="VAR_031469" description="In dbSNP:rs17856640." evidence="6">
    <original>A</original>
    <variation>S</variation>
    <location>
        <position position="852"/>
    </location>
</feature>
<feature type="sequence variant" id="VAR_057315" description="In dbSNP:rs9989776.">
    <original>T</original>
    <variation>I</variation>
    <location>
        <position position="1138"/>
    </location>
</feature>
<feature type="mutagenesis site" description="Decreased binding to microtubules and polyglutamylase activity." evidence="7">
    <original>KMKK</original>
    <variation>EMEE</variation>
    <location>
        <begin position="978"/>
        <end position="981"/>
    </location>
</feature>
<reference key="1">
    <citation type="journal article" date="1996" name="DNA Res.">
        <title>Prediction of the coding sequences of unidentified human genes. V. The coding sequences of 40 new genes (KIAA0161-KIAA0200) deduced by analysis of cDNA clones from human cell line KG-1.</title>
        <authorList>
            <person name="Nagase T."/>
            <person name="Seki N."/>
            <person name="Ishikawa K."/>
            <person name="Tanaka A."/>
            <person name="Nomura N."/>
        </authorList>
    </citation>
    <scope>NUCLEOTIDE SEQUENCE [LARGE SCALE MRNA]</scope>
    <scope>VARIANT GLN-34</scope>
    <source>
        <tissue>Bone marrow</tissue>
    </source>
</reference>
<reference key="2">
    <citation type="journal article" date="2004" name="Nat. Genet.">
        <title>Complete sequencing and characterization of 21,243 full-length human cDNAs.</title>
        <authorList>
            <person name="Ota T."/>
            <person name="Suzuki Y."/>
            <person name="Nishikawa T."/>
            <person name="Otsuki T."/>
            <person name="Sugiyama T."/>
            <person name="Irie R."/>
            <person name="Wakamatsu A."/>
            <person name="Hayashi K."/>
            <person name="Sato H."/>
            <person name="Nagai K."/>
            <person name="Kimura K."/>
            <person name="Makita H."/>
            <person name="Sekine M."/>
            <person name="Obayashi M."/>
            <person name="Nishi T."/>
            <person name="Shibahara T."/>
            <person name="Tanaka T."/>
            <person name="Ishii S."/>
            <person name="Yamamoto J."/>
            <person name="Saito K."/>
            <person name="Kawai Y."/>
            <person name="Isono Y."/>
            <person name="Nakamura Y."/>
            <person name="Nagahari K."/>
            <person name="Murakami K."/>
            <person name="Yasuda T."/>
            <person name="Iwayanagi T."/>
            <person name="Wagatsuma M."/>
            <person name="Shiratori A."/>
            <person name="Sudo H."/>
            <person name="Hosoiri T."/>
            <person name="Kaku Y."/>
            <person name="Kodaira H."/>
            <person name="Kondo H."/>
            <person name="Sugawara M."/>
            <person name="Takahashi M."/>
            <person name="Kanda K."/>
            <person name="Yokoi T."/>
            <person name="Furuya T."/>
            <person name="Kikkawa E."/>
            <person name="Omura Y."/>
            <person name="Abe K."/>
            <person name="Kamihara K."/>
            <person name="Katsuta N."/>
            <person name="Sato K."/>
            <person name="Tanikawa M."/>
            <person name="Yamazaki M."/>
            <person name="Ninomiya K."/>
            <person name="Ishibashi T."/>
            <person name="Yamashita H."/>
            <person name="Murakawa K."/>
            <person name="Fujimori K."/>
            <person name="Tanai H."/>
            <person name="Kimata M."/>
            <person name="Watanabe M."/>
            <person name="Hiraoka S."/>
            <person name="Chiba Y."/>
            <person name="Ishida S."/>
            <person name="Ono Y."/>
            <person name="Takiguchi S."/>
            <person name="Watanabe S."/>
            <person name="Yosida M."/>
            <person name="Hotuta T."/>
            <person name="Kusano J."/>
            <person name="Kanehori K."/>
            <person name="Takahashi-Fujii A."/>
            <person name="Hara H."/>
            <person name="Tanase T.-O."/>
            <person name="Nomura Y."/>
            <person name="Togiya S."/>
            <person name="Komai F."/>
            <person name="Hara R."/>
            <person name="Takeuchi K."/>
            <person name="Arita M."/>
            <person name="Imose N."/>
            <person name="Musashino K."/>
            <person name="Yuuki H."/>
            <person name="Oshima A."/>
            <person name="Sasaki N."/>
            <person name="Aotsuka S."/>
            <person name="Yoshikawa Y."/>
            <person name="Matsunawa H."/>
            <person name="Ichihara T."/>
            <person name="Shiohata N."/>
            <person name="Sano S."/>
            <person name="Moriya S."/>
            <person name="Momiyama H."/>
            <person name="Satoh N."/>
            <person name="Takami S."/>
            <person name="Terashima Y."/>
            <person name="Suzuki O."/>
            <person name="Nakagawa S."/>
            <person name="Senoh A."/>
            <person name="Mizoguchi H."/>
            <person name="Goto Y."/>
            <person name="Shimizu F."/>
            <person name="Wakebe H."/>
            <person name="Hishigaki H."/>
            <person name="Watanabe T."/>
            <person name="Sugiyama A."/>
            <person name="Takemoto M."/>
            <person name="Kawakami B."/>
            <person name="Yamazaki M."/>
            <person name="Watanabe K."/>
            <person name="Kumagai A."/>
            <person name="Itakura S."/>
            <person name="Fukuzumi Y."/>
            <person name="Fujimori Y."/>
            <person name="Komiyama M."/>
            <person name="Tashiro H."/>
            <person name="Tanigami A."/>
            <person name="Fujiwara T."/>
            <person name="Ono T."/>
            <person name="Yamada K."/>
            <person name="Fujii Y."/>
            <person name="Ozaki K."/>
            <person name="Hirao M."/>
            <person name="Ohmori Y."/>
            <person name="Kawabata A."/>
            <person name="Hikiji T."/>
            <person name="Kobatake N."/>
            <person name="Inagaki H."/>
            <person name="Ikema Y."/>
            <person name="Okamoto S."/>
            <person name="Okitani R."/>
            <person name="Kawakami T."/>
            <person name="Noguchi S."/>
            <person name="Itoh T."/>
            <person name="Shigeta K."/>
            <person name="Senba T."/>
            <person name="Matsumura K."/>
            <person name="Nakajima Y."/>
            <person name="Mizuno T."/>
            <person name="Morinaga M."/>
            <person name="Sasaki M."/>
            <person name="Togashi T."/>
            <person name="Oyama M."/>
            <person name="Hata H."/>
            <person name="Watanabe M."/>
            <person name="Komatsu T."/>
            <person name="Mizushima-Sugano J."/>
            <person name="Satoh T."/>
            <person name="Shirai Y."/>
            <person name="Takahashi Y."/>
            <person name="Nakagawa K."/>
            <person name="Okumura K."/>
            <person name="Nagase T."/>
            <person name="Nomura N."/>
            <person name="Kikuchi H."/>
            <person name="Masuho Y."/>
            <person name="Yamashita R."/>
            <person name="Nakai K."/>
            <person name="Yada T."/>
            <person name="Nakamura Y."/>
            <person name="Ohara O."/>
            <person name="Isogai T."/>
            <person name="Sugano S."/>
        </authorList>
    </citation>
    <scope>NUCLEOTIDE SEQUENCE [LARGE SCALE MRNA]</scope>
    <source>
        <tissue>Placenta</tissue>
    </source>
</reference>
<reference key="3">
    <citation type="submission" date="2005-07" db="EMBL/GenBank/DDBJ databases">
        <authorList>
            <person name="Mural R.J."/>
            <person name="Istrail S."/>
            <person name="Sutton G.G."/>
            <person name="Florea L."/>
            <person name="Halpern A.L."/>
            <person name="Mobarry C.M."/>
            <person name="Lippert R."/>
            <person name="Walenz B."/>
            <person name="Shatkay H."/>
            <person name="Dew I."/>
            <person name="Miller J.R."/>
            <person name="Flanigan M.J."/>
            <person name="Edwards N.J."/>
            <person name="Bolanos R."/>
            <person name="Fasulo D."/>
            <person name="Halldorsson B.V."/>
            <person name="Hannenhalli S."/>
            <person name="Turner R."/>
            <person name="Yooseph S."/>
            <person name="Lu F."/>
            <person name="Nusskern D.R."/>
            <person name="Shue B.C."/>
            <person name="Zheng X.H."/>
            <person name="Zhong F."/>
            <person name="Delcher A.L."/>
            <person name="Huson D.H."/>
            <person name="Kravitz S.A."/>
            <person name="Mouchard L."/>
            <person name="Reinert K."/>
            <person name="Remington K.A."/>
            <person name="Clark A.G."/>
            <person name="Waterman M.S."/>
            <person name="Eichler E.E."/>
            <person name="Adams M.D."/>
            <person name="Hunkapiller M.W."/>
            <person name="Myers E.W."/>
            <person name="Venter J.C."/>
        </authorList>
    </citation>
    <scope>NUCLEOTIDE SEQUENCE [LARGE SCALE GENOMIC DNA]</scope>
</reference>
<reference key="4">
    <citation type="journal article" date="2004" name="Genome Res.">
        <title>The status, quality, and expansion of the NIH full-length cDNA project: the Mammalian Gene Collection (MGC).</title>
        <authorList>
            <consortium name="The MGC Project Team"/>
        </authorList>
    </citation>
    <scope>NUCLEOTIDE SEQUENCE [LARGE SCALE MRNA]</scope>
    <scope>VARIANTS SER-17; SER-518; GLY-524 AND SER-852</scope>
    <source>
        <tissue>Testis</tissue>
    </source>
</reference>
<reference key="5">
    <citation type="journal article" date="2009" name="Sci. Signal.">
        <title>Quantitative phosphoproteomic analysis of T cell receptor signaling reveals system-wide modulation of protein-protein interactions.</title>
        <authorList>
            <person name="Mayya V."/>
            <person name="Lundgren D.H."/>
            <person name="Hwang S.-I."/>
            <person name="Rezaul K."/>
            <person name="Wu L."/>
            <person name="Eng J.K."/>
            <person name="Rodionov V."/>
            <person name="Han D.K."/>
        </authorList>
    </citation>
    <scope>PHOSPHORYLATION [LARGE SCALE ANALYSIS] AT SER-691</scope>
    <scope>IDENTIFICATION BY MASS SPECTROMETRY [LARGE SCALE ANALYSIS]</scope>
    <source>
        <tissue>Leukemic T-cell</tissue>
    </source>
</reference>
<reference key="6">
    <citation type="journal article" date="2015" name="Cell">
        <title>Multivalent microtubule recognition by tubulin tyrosine ligase-like family glutamylases.</title>
        <authorList>
            <person name="Garnham C.P."/>
            <person name="Vemu A."/>
            <person name="Wilson-Kubalek E.M."/>
            <person name="Yu I."/>
            <person name="Szyk A."/>
            <person name="Lander G.C."/>
            <person name="Milligan R.A."/>
            <person name="Roll-Mecak A."/>
        </authorList>
    </citation>
    <scope>DOMAIN</scope>
    <scope>MUTAGENESIS OF 978-LYS--LYS-981</scope>
</reference>